<keyword id="KW-0256">Endoplasmic reticulum</keyword>
<keyword id="KW-0275">Fatty acid biosynthesis</keyword>
<keyword id="KW-0276">Fatty acid metabolism</keyword>
<keyword id="KW-0444">Lipid biosynthesis</keyword>
<keyword id="KW-0443">Lipid metabolism</keyword>
<keyword id="KW-0472">Membrane</keyword>
<keyword id="KW-0521">NADP</keyword>
<keyword id="KW-0560">Oxidoreductase</keyword>
<keyword id="KW-1185">Reference proteome</keyword>
<keyword id="KW-0812">Transmembrane</keyword>
<keyword id="KW-1133">Transmembrane helix</keyword>
<sequence>MSVVDFIQAITENKFGEYVLLGALLVGVFKLTVFILSVTSLLVDLFVLPATNLKTYGAKKGKWAVITGASDGIGKEYAFQLASKGFNVVLVSRTQAKLETLASEIEAKYKVETKVVAFDASTDAEDNYKSLGDAISGLPVTVLINNVGQSHSIPVPFLETENKELQDIITINVTATLKITQTVAPVIAETVSKEKKKVRGLILTMGSFGGLLPTPYLATYSGSKSFLQAWSAALAGELQSQGVDVELVISYLVTSAMSKIRRASLSIPSPKNFVRATLNGIGRRNGAQERYATSTPYWAHALMHFGIDQTVGVYSKLANSLNLNMHKSIRARALKKAARLAAEKKD</sequence>
<reference key="1">
    <citation type="journal article" date="2007" name="Nat. Biotechnol.">
        <title>Genome sequence of the lignocellulose-bioconverting and xylose-fermenting yeast Pichia stipitis.</title>
        <authorList>
            <person name="Jeffries T.W."/>
            <person name="Grigoriev I.V."/>
            <person name="Grimwood J."/>
            <person name="Laplaza J.M."/>
            <person name="Aerts A."/>
            <person name="Salamov A."/>
            <person name="Schmutz J."/>
            <person name="Lindquist E."/>
            <person name="Dehal P."/>
            <person name="Shapiro H."/>
            <person name="Jin Y.-S."/>
            <person name="Passoth V."/>
            <person name="Richardson P.M."/>
        </authorList>
    </citation>
    <scope>NUCLEOTIDE SEQUENCE [LARGE SCALE GENOMIC DNA]</scope>
    <source>
        <strain>ATCC 58785 / CBS 6054 / NBRC 10063 / NRRL Y-11545</strain>
    </source>
</reference>
<protein>
    <recommendedName>
        <fullName evidence="4">Very-long-chain 3-oxoacyl-CoA reductase</fullName>
        <ecNumber evidence="4">1.1.1.330</ecNumber>
    </recommendedName>
    <alternativeName>
        <fullName evidence="4">3-ketoacyl-CoA reductase</fullName>
        <shortName evidence="4">3-ketoreductase</shortName>
        <shortName evidence="4">KAR</shortName>
    </alternativeName>
    <alternativeName>
        <fullName evidence="4">Microsomal beta-keto-reductase</fullName>
    </alternativeName>
</protein>
<evidence type="ECO:0000250" key="1">
    <source>
        <dbReference type="UniProtKB" id="L0E2Z4"/>
    </source>
</evidence>
<evidence type="ECO:0000250" key="2">
    <source>
        <dbReference type="UniProtKB" id="O93868"/>
    </source>
</evidence>
<evidence type="ECO:0000250" key="3">
    <source>
        <dbReference type="UniProtKB" id="P38286"/>
    </source>
</evidence>
<evidence type="ECO:0000255" key="4">
    <source>
        <dbReference type="HAMAP-Rule" id="MF_03107"/>
    </source>
</evidence>
<proteinExistence type="inferred from homology"/>
<accession>A3LXZ3</accession>
<name>MKAR_PICST</name>
<dbReference type="EC" id="1.1.1.330" evidence="4"/>
<dbReference type="EMBL" id="CP000500">
    <property type="protein sequence ID" value="ABN67888.1"/>
    <property type="molecule type" value="Genomic_DNA"/>
</dbReference>
<dbReference type="SMR" id="A3LXZ3"/>
<dbReference type="FunCoup" id="A3LXZ3">
    <property type="interactions" value="753"/>
</dbReference>
<dbReference type="STRING" id="322104.A3LXZ3"/>
<dbReference type="KEGG" id="pic:PICST_79198"/>
<dbReference type="eggNOG" id="KOG1014">
    <property type="taxonomic scope" value="Eukaryota"/>
</dbReference>
<dbReference type="HOGENOM" id="CLU_010194_38_0_1"/>
<dbReference type="InParanoid" id="A3LXZ3"/>
<dbReference type="OMA" id="LVAPGMM"/>
<dbReference type="OrthoDB" id="5545019at2759"/>
<dbReference type="UniPathway" id="UPA00094"/>
<dbReference type="Proteomes" id="UP000002258">
    <property type="component" value="Chromosome 6"/>
</dbReference>
<dbReference type="GO" id="GO:0005789">
    <property type="term" value="C:endoplasmic reticulum membrane"/>
    <property type="evidence" value="ECO:0007669"/>
    <property type="project" value="UniProtKB-SubCell"/>
</dbReference>
<dbReference type="GO" id="GO:0045703">
    <property type="term" value="F:ketoreductase activity"/>
    <property type="evidence" value="ECO:0007669"/>
    <property type="project" value="UniProtKB-UniRule"/>
</dbReference>
<dbReference type="GO" id="GO:0141040">
    <property type="term" value="F:very-long-chain 3-oxoacyl-CoA reductase activity"/>
    <property type="evidence" value="ECO:0007669"/>
    <property type="project" value="UniProtKB-EC"/>
</dbReference>
<dbReference type="GO" id="GO:0030497">
    <property type="term" value="P:fatty acid elongation"/>
    <property type="evidence" value="ECO:0007669"/>
    <property type="project" value="UniProtKB-UniRule"/>
</dbReference>
<dbReference type="GO" id="GO:0030148">
    <property type="term" value="P:sphingolipid biosynthetic process"/>
    <property type="evidence" value="ECO:0007669"/>
    <property type="project" value="EnsemblFungi"/>
</dbReference>
<dbReference type="GO" id="GO:0042761">
    <property type="term" value="P:very long-chain fatty acid biosynthetic process"/>
    <property type="evidence" value="ECO:0007669"/>
    <property type="project" value="EnsemblFungi"/>
</dbReference>
<dbReference type="CDD" id="cd05356">
    <property type="entry name" value="17beta-HSD1_like_SDR_c"/>
    <property type="match status" value="1"/>
</dbReference>
<dbReference type="FunFam" id="3.40.50.720:FF:000317">
    <property type="entry name" value="Very-long-chain 3-oxoacyl-CoA reductase"/>
    <property type="match status" value="1"/>
</dbReference>
<dbReference type="Gene3D" id="3.40.50.720">
    <property type="entry name" value="NAD(P)-binding Rossmann-like Domain"/>
    <property type="match status" value="1"/>
</dbReference>
<dbReference type="HAMAP" id="MF_03107">
    <property type="entry name" value="3_ketoreductase"/>
    <property type="match status" value="1"/>
</dbReference>
<dbReference type="InterPro" id="IPR027533">
    <property type="entry name" value="3_ketoreductase_fungal"/>
</dbReference>
<dbReference type="InterPro" id="IPR036291">
    <property type="entry name" value="NAD(P)-bd_dom_sf"/>
</dbReference>
<dbReference type="InterPro" id="IPR020904">
    <property type="entry name" value="Sc_DH/Rdtase_CS"/>
</dbReference>
<dbReference type="InterPro" id="IPR002347">
    <property type="entry name" value="SDR_fam"/>
</dbReference>
<dbReference type="PANTHER" id="PTHR43086:SF2">
    <property type="entry name" value="HYDROXYSTEROID DEHYDROGENASE-LIKE PROTEIN 1"/>
    <property type="match status" value="1"/>
</dbReference>
<dbReference type="PANTHER" id="PTHR43086">
    <property type="entry name" value="VERY-LONG-CHAIN 3-OXOOACYL-COA REDUCTASE"/>
    <property type="match status" value="1"/>
</dbReference>
<dbReference type="Pfam" id="PF00106">
    <property type="entry name" value="adh_short"/>
    <property type="match status" value="1"/>
</dbReference>
<dbReference type="PIRSF" id="PIRSF000126">
    <property type="entry name" value="11-beta-HSD1"/>
    <property type="match status" value="1"/>
</dbReference>
<dbReference type="PRINTS" id="PR00081">
    <property type="entry name" value="GDHRDH"/>
</dbReference>
<dbReference type="SUPFAM" id="SSF51735">
    <property type="entry name" value="NAD(P)-binding Rossmann-fold domains"/>
    <property type="match status" value="1"/>
</dbReference>
<dbReference type="PROSITE" id="PS00061">
    <property type="entry name" value="ADH_SHORT"/>
    <property type="match status" value="1"/>
</dbReference>
<feature type="chain" id="PRO_0000357319" description="Very-long-chain 3-oxoacyl-CoA reductase">
    <location>
        <begin position="1"/>
        <end position="346"/>
    </location>
</feature>
<feature type="transmembrane region" description="Helical" evidence="4">
    <location>
        <begin position="19"/>
        <end position="39"/>
    </location>
</feature>
<feature type="active site" description="Proton donor" evidence="2">
    <location>
        <position position="220"/>
    </location>
</feature>
<feature type="active site" description="Lowers pKa of active site Tyr" evidence="2">
    <location>
        <position position="224"/>
    </location>
</feature>
<feature type="binding site" evidence="1">
    <location>
        <position position="65"/>
    </location>
    <ligand>
        <name>NADP(+)</name>
        <dbReference type="ChEBI" id="CHEBI:58349"/>
    </ligand>
</feature>
<feature type="binding site" evidence="1">
    <location>
        <position position="119"/>
    </location>
    <ligand>
        <name>NADP(+)</name>
        <dbReference type="ChEBI" id="CHEBI:58349"/>
    </ligand>
</feature>
<feature type="binding site" evidence="2">
    <location>
        <position position="146"/>
    </location>
    <ligand>
        <name>NADP(+)</name>
        <dbReference type="ChEBI" id="CHEBI:58349"/>
    </ligand>
</feature>
<feature type="binding site" evidence="2">
    <location>
        <position position="220"/>
    </location>
    <ligand>
        <name>NADP(+)</name>
        <dbReference type="ChEBI" id="CHEBI:58349"/>
    </ligand>
</feature>
<feature type="binding site" evidence="2">
    <location>
        <position position="224"/>
    </location>
    <ligand>
        <name>NADP(+)</name>
        <dbReference type="ChEBI" id="CHEBI:58349"/>
    </ligand>
</feature>
<feature type="binding site" evidence="2">
    <location>
        <position position="253"/>
    </location>
    <ligand>
        <name>NADP(+)</name>
        <dbReference type="ChEBI" id="CHEBI:58349"/>
    </ligand>
</feature>
<feature type="binding site" evidence="1">
    <location>
        <position position="255"/>
    </location>
    <ligand>
        <name>NADP(+)</name>
        <dbReference type="ChEBI" id="CHEBI:58349"/>
    </ligand>
</feature>
<gene>
    <name type="ORF">PICST_79198</name>
</gene>
<organism>
    <name type="scientific">Scheffersomyces stipitis (strain ATCC 58785 / CBS 6054 / NBRC 10063 / NRRL Y-11545)</name>
    <name type="common">Yeast</name>
    <name type="synonym">Pichia stipitis</name>
    <dbReference type="NCBI Taxonomy" id="322104"/>
    <lineage>
        <taxon>Eukaryota</taxon>
        <taxon>Fungi</taxon>
        <taxon>Dikarya</taxon>
        <taxon>Ascomycota</taxon>
        <taxon>Saccharomycotina</taxon>
        <taxon>Pichiomycetes</taxon>
        <taxon>Debaryomycetaceae</taxon>
        <taxon>Scheffersomyces</taxon>
    </lineage>
</organism>
<comment type="function">
    <text evidence="4">Component of the microsomal membrane bound fatty acid elongation system, which produces the 26-carbon very long-chain fatty acids (VLCFA) from palmitate. Catalyzes the reduction of the 3-ketoacyl-CoA intermediate that is formed in each cycle of fatty acid elongation. VLCFAs serve as precursors for ceramide and sphingolipids.</text>
</comment>
<comment type="catalytic activity">
    <reaction evidence="4">
        <text>a very-long-chain (3R)-3-hydroxyacyl-CoA + NADP(+) = a very-long-chain 3-oxoacyl-CoA + NADPH + H(+)</text>
        <dbReference type="Rhea" id="RHEA:48680"/>
        <dbReference type="ChEBI" id="CHEBI:15378"/>
        <dbReference type="ChEBI" id="CHEBI:57783"/>
        <dbReference type="ChEBI" id="CHEBI:58349"/>
        <dbReference type="ChEBI" id="CHEBI:85440"/>
        <dbReference type="ChEBI" id="CHEBI:90725"/>
        <dbReference type="EC" id="1.1.1.330"/>
    </reaction>
</comment>
<comment type="pathway">
    <text evidence="3">Lipid metabolism; fatty acid biosynthesis.</text>
</comment>
<comment type="subcellular location">
    <subcellularLocation>
        <location evidence="4">Endoplasmic reticulum membrane</location>
        <topology evidence="4">Single-pass membrane protein</topology>
    </subcellularLocation>
</comment>
<comment type="similarity">
    <text evidence="4">Belongs to the short-chain dehydrogenases/reductases (SDR) family.</text>
</comment>